<evidence type="ECO:0000255" key="1">
    <source>
        <dbReference type="HAMAP-Rule" id="MF_00296"/>
    </source>
</evidence>
<accession>B0SQZ8</accession>
<dbReference type="EC" id="2.3.1.31" evidence="1"/>
<dbReference type="EMBL" id="CP000786">
    <property type="protein sequence ID" value="ABZ97699.1"/>
    <property type="molecule type" value="Genomic_DNA"/>
</dbReference>
<dbReference type="SMR" id="B0SQZ8"/>
<dbReference type="STRING" id="456481.LEPBI_I1592"/>
<dbReference type="ESTHER" id="lepba-metx">
    <property type="family name" value="Homoserine_transacetylase"/>
</dbReference>
<dbReference type="KEGG" id="lbi:LEPBI_I1592"/>
<dbReference type="HOGENOM" id="CLU_028760_1_2_12"/>
<dbReference type="OrthoDB" id="9800754at2"/>
<dbReference type="BioCyc" id="LBIF456481:LEPBI_RS07855-MONOMER"/>
<dbReference type="UniPathway" id="UPA00051">
    <property type="reaction ID" value="UER00074"/>
</dbReference>
<dbReference type="Proteomes" id="UP000001847">
    <property type="component" value="Chromosome I"/>
</dbReference>
<dbReference type="GO" id="GO:0005737">
    <property type="term" value="C:cytoplasm"/>
    <property type="evidence" value="ECO:0007669"/>
    <property type="project" value="UniProtKB-SubCell"/>
</dbReference>
<dbReference type="GO" id="GO:0004414">
    <property type="term" value="F:homoserine O-acetyltransferase activity"/>
    <property type="evidence" value="ECO:0007669"/>
    <property type="project" value="UniProtKB-UniRule"/>
</dbReference>
<dbReference type="GO" id="GO:0009092">
    <property type="term" value="P:homoserine metabolic process"/>
    <property type="evidence" value="ECO:0007669"/>
    <property type="project" value="TreeGrafter"/>
</dbReference>
<dbReference type="GO" id="GO:0009086">
    <property type="term" value="P:methionine biosynthetic process"/>
    <property type="evidence" value="ECO:0007669"/>
    <property type="project" value="UniProtKB-UniRule"/>
</dbReference>
<dbReference type="FunFam" id="1.10.1740.110:FF:000001">
    <property type="entry name" value="Homoserine O-acetyltransferase"/>
    <property type="match status" value="1"/>
</dbReference>
<dbReference type="Gene3D" id="1.10.1740.110">
    <property type="match status" value="1"/>
</dbReference>
<dbReference type="Gene3D" id="3.40.50.1820">
    <property type="entry name" value="alpha/beta hydrolase"/>
    <property type="match status" value="1"/>
</dbReference>
<dbReference type="HAMAP" id="MF_00296">
    <property type="entry name" value="MetX_acyltransf"/>
    <property type="match status" value="1"/>
</dbReference>
<dbReference type="InterPro" id="IPR000073">
    <property type="entry name" value="AB_hydrolase_1"/>
</dbReference>
<dbReference type="InterPro" id="IPR029058">
    <property type="entry name" value="AB_hydrolase_fold"/>
</dbReference>
<dbReference type="InterPro" id="IPR008220">
    <property type="entry name" value="HAT_MetX-like"/>
</dbReference>
<dbReference type="NCBIfam" id="TIGR01392">
    <property type="entry name" value="homoserO_Ac_trn"/>
    <property type="match status" value="1"/>
</dbReference>
<dbReference type="NCBIfam" id="NF001209">
    <property type="entry name" value="PRK00175.1"/>
    <property type="match status" value="1"/>
</dbReference>
<dbReference type="PANTHER" id="PTHR32268">
    <property type="entry name" value="HOMOSERINE O-ACETYLTRANSFERASE"/>
    <property type="match status" value="1"/>
</dbReference>
<dbReference type="PANTHER" id="PTHR32268:SF11">
    <property type="entry name" value="HOMOSERINE O-ACETYLTRANSFERASE"/>
    <property type="match status" value="1"/>
</dbReference>
<dbReference type="Pfam" id="PF00561">
    <property type="entry name" value="Abhydrolase_1"/>
    <property type="match status" value="1"/>
</dbReference>
<dbReference type="PIRSF" id="PIRSF000443">
    <property type="entry name" value="Homoser_Ac_trans"/>
    <property type="match status" value="1"/>
</dbReference>
<dbReference type="SUPFAM" id="SSF53474">
    <property type="entry name" value="alpha/beta-Hydrolases"/>
    <property type="match status" value="1"/>
</dbReference>
<gene>
    <name evidence="1" type="primary">metXA</name>
    <name type="ordered locus">LEPBI_I1592</name>
</gene>
<reference key="1">
    <citation type="journal article" date="2008" name="PLoS ONE">
        <title>Genome sequence of the saprophyte Leptospira biflexa provides insights into the evolution of Leptospira and the pathogenesis of leptospirosis.</title>
        <authorList>
            <person name="Picardeau M."/>
            <person name="Bulach D.M."/>
            <person name="Bouchier C."/>
            <person name="Zuerner R.L."/>
            <person name="Zidane N."/>
            <person name="Wilson P.J."/>
            <person name="Creno S."/>
            <person name="Kuczek E.S."/>
            <person name="Bommezzadri S."/>
            <person name="Davis J.C."/>
            <person name="McGrath A."/>
            <person name="Johnson M.J."/>
            <person name="Boursaux-Eude C."/>
            <person name="Seemann T."/>
            <person name="Rouy Z."/>
            <person name="Coppel R.L."/>
            <person name="Rood J.I."/>
            <person name="Lajus A."/>
            <person name="Davies J.K."/>
            <person name="Medigue C."/>
            <person name="Adler B."/>
        </authorList>
    </citation>
    <scope>NUCLEOTIDE SEQUENCE [LARGE SCALE GENOMIC DNA]</scope>
    <source>
        <strain>Patoc 1 / ATCC 23582 / Paris</strain>
    </source>
</reference>
<feature type="chain" id="PRO_1000115228" description="Homoserine O-acetyltransferase">
    <location>
        <begin position="1"/>
        <end position="378"/>
    </location>
</feature>
<feature type="domain" description="AB hydrolase-1" evidence="1">
    <location>
        <begin position="54"/>
        <end position="355"/>
    </location>
</feature>
<feature type="active site" description="Nucleophile" evidence="1">
    <location>
        <position position="159"/>
    </location>
</feature>
<feature type="active site" evidence="1">
    <location>
        <position position="318"/>
    </location>
</feature>
<feature type="active site" evidence="1">
    <location>
        <position position="351"/>
    </location>
</feature>
<feature type="binding site" evidence="1">
    <location>
        <position position="228"/>
    </location>
    <ligand>
        <name>substrate</name>
    </ligand>
</feature>
<feature type="binding site" evidence="1">
    <location>
        <position position="352"/>
    </location>
    <ligand>
        <name>substrate</name>
    </ligand>
</feature>
<organism>
    <name type="scientific">Leptospira biflexa serovar Patoc (strain Patoc 1 / ATCC 23582 / Paris)</name>
    <dbReference type="NCBI Taxonomy" id="456481"/>
    <lineage>
        <taxon>Bacteria</taxon>
        <taxon>Pseudomonadati</taxon>
        <taxon>Spirochaetota</taxon>
        <taxon>Spirochaetia</taxon>
        <taxon>Leptospirales</taxon>
        <taxon>Leptospiraceae</taxon>
        <taxon>Leptospira</taxon>
    </lineage>
</organism>
<keyword id="KW-0012">Acyltransferase</keyword>
<keyword id="KW-0028">Amino-acid biosynthesis</keyword>
<keyword id="KW-0963">Cytoplasm</keyword>
<keyword id="KW-0486">Methionine biosynthesis</keyword>
<keyword id="KW-1185">Reference proteome</keyword>
<keyword id="KW-0808">Transferase</keyword>
<protein>
    <recommendedName>
        <fullName evidence="1">Homoserine O-acetyltransferase</fullName>
        <shortName evidence="1">HAT</shortName>
        <ecNumber evidence="1">2.3.1.31</ecNumber>
    </recommendedName>
    <alternativeName>
        <fullName evidence="1">Homoserine transacetylase</fullName>
        <shortName evidence="1">HTA</shortName>
    </alternativeName>
</protein>
<name>METXA_LEPBP</name>
<comment type="function">
    <text evidence="1">Transfers an acetyl group from acetyl-CoA to L-homoserine, forming acetyl-L-homoserine.</text>
</comment>
<comment type="catalytic activity">
    <reaction evidence="1">
        <text>L-homoserine + acetyl-CoA = O-acetyl-L-homoserine + CoA</text>
        <dbReference type="Rhea" id="RHEA:13701"/>
        <dbReference type="ChEBI" id="CHEBI:57287"/>
        <dbReference type="ChEBI" id="CHEBI:57288"/>
        <dbReference type="ChEBI" id="CHEBI:57476"/>
        <dbReference type="ChEBI" id="CHEBI:57716"/>
        <dbReference type="EC" id="2.3.1.31"/>
    </reaction>
</comment>
<comment type="pathway">
    <text evidence="1">Amino-acid biosynthesis; L-methionine biosynthesis via de novo pathway; O-acetyl-L-homoserine from L-homoserine: step 1/1.</text>
</comment>
<comment type="subunit">
    <text evidence="1">Homodimer.</text>
</comment>
<comment type="subcellular location">
    <subcellularLocation>
        <location evidence="1">Cytoplasm</location>
    </subcellularLocation>
</comment>
<comment type="similarity">
    <text evidence="1">Belongs to the AB hydrolase superfamily. MetX family.</text>
</comment>
<sequence>MPTSEPNDFFHGSVGIVQTQVATFDSLTLEGGETITPLEIAYETYGTLNQKKDNAILVCHALSGDAHAAGFHEGDKRPGWWDYYIGPGKAFDTNRYFIISSNVIGGCKGSSGPLSTNGNTGKPFQSTFPFVSIGDMVNAQEKLIRHFGIHKLFAVAGGSMGGMQALQWSVAYPDRLKNCIVMASSSEHSAQQIAFNEVGRQAILSDPNWNQGLYTQEKRPSKGLALARMMGHITYLSDEMMREKFGRKPPKGNIQSTDFAVGSYLIYQGESFVDRFDANSYIYVTKALDHFSLGTGKELTKVLSKVRCRFLVIAYTSDWLYPPYQSEEIVKSLEVNAVPVSFIELNNPAGHDSFLLPSEEQDSILRDFLSATDEGGFF</sequence>
<proteinExistence type="inferred from homology"/>